<name>PSB4_ENCCU</name>
<organism>
    <name type="scientific">Encephalitozoon cuniculi (strain GB-M1)</name>
    <name type="common">Microsporidian parasite</name>
    <dbReference type="NCBI Taxonomy" id="284813"/>
    <lineage>
        <taxon>Eukaryota</taxon>
        <taxon>Fungi</taxon>
        <taxon>Fungi incertae sedis</taxon>
        <taxon>Microsporidia</taxon>
        <taxon>Unikaryonidae</taxon>
        <taxon>Encephalitozoon</taxon>
    </lineage>
</organism>
<dbReference type="EMBL" id="AL590448">
    <property type="protein sequence ID" value="CAD26333.1"/>
    <property type="molecule type" value="Genomic_DNA"/>
</dbReference>
<dbReference type="RefSeq" id="NP_597157.1">
    <property type="nucleotide sequence ID" value="NM_001041766.1"/>
</dbReference>
<dbReference type="SMR" id="Q8SRF1"/>
<dbReference type="FunCoup" id="Q8SRF1">
    <property type="interactions" value="249"/>
</dbReference>
<dbReference type="STRING" id="284813.Q8SRF1"/>
<dbReference type="GeneID" id="859579"/>
<dbReference type="KEGG" id="ecu:ECU08_0280"/>
<dbReference type="VEuPathDB" id="MicrosporidiaDB:ECU08_0280"/>
<dbReference type="HOGENOM" id="CLU_035750_12_1_1"/>
<dbReference type="InParanoid" id="Q8SRF1"/>
<dbReference type="OMA" id="MKRDHDK"/>
<dbReference type="OrthoDB" id="268428at2759"/>
<dbReference type="Proteomes" id="UP000000819">
    <property type="component" value="Chromosome VIII"/>
</dbReference>
<dbReference type="GO" id="GO:0005737">
    <property type="term" value="C:cytoplasm"/>
    <property type="evidence" value="ECO:0007669"/>
    <property type="project" value="UniProtKB-SubCell"/>
</dbReference>
<dbReference type="GO" id="GO:0005634">
    <property type="term" value="C:nucleus"/>
    <property type="evidence" value="ECO:0007669"/>
    <property type="project" value="UniProtKB-SubCell"/>
</dbReference>
<dbReference type="GO" id="GO:0019774">
    <property type="term" value="C:proteasome core complex, beta-subunit complex"/>
    <property type="evidence" value="ECO:0000250"/>
    <property type="project" value="UniProtKB"/>
</dbReference>
<dbReference type="GO" id="GO:0010498">
    <property type="term" value="P:proteasomal protein catabolic process"/>
    <property type="evidence" value="ECO:0007669"/>
    <property type="project" value="InterPro"/>
</dbReference>
<dbReference type="CDD" id="cd03758">
    <property type="entry name" value="proteasome_beta_type_2"/>
    <property type="match status" value="1"/>
</dbReference>
<dbReference type="Gene3D" id="3.60.20.10">
    <property type="entry name" value="Glutamine Phosphoribosylpyrophosphate, subunit 1, domain 1"/>
    <property type="match status" value="1"/>
</dbReference>
<dbReference type="InterPro" id="IPR029055">
    <property type="entry name" value="Ntn_hydrolases_N"/>
</dbReference>
<dbReference type="InterPro" id="IPR035206">
    <property type="entry name" value="Proteasome_beta2"/>
</dbReference>
<dbReference type="InterPro" id="IPR016050">
    <property type="entry name" value="Proteasome_bsu_CS"/>
</dbReference>
<dbReference type="InterPro" id="IPR001353">
    <property type="entry name" value="Proteasome_sua/b"/>
</dbReference>
<dbReference type="InterPro" id="IPR023333">
    <property type="entry name" value="Proteasome_suB-type"/>
</dbReference>
<dbReference type="PANTHER" id="PTHR32194">
    <property type="entry name" value="METALLOPROTEASE TLDD"/>
    <property type="match status" value="1"/>
</dbReference>
<dbReference type="PANTHER" id="PTHR32194:SF2">
    <property type="entry name" value="PROTEASOME SUBUNIT BETA TYPE-1"/>
    <property type="match status" value="1"/>
</dbReference>
<dbReference type="Pfam" id="PF00227">
    <property type="entry name" value="Proteasome"/>
    <property type="match status" value="1"/>
</dbReference>
<dbReference type="SUPFAM" id="SSF56235">
    <property type="entry name" value="N-terminal nucleophile aminohydrolases (Ntn hydrolases)"/>
    <property type="match status" value="1"/>
</dbReference>
<dbReference type="PROSITE" id="PS00854">
    <property type="entry name" value="PROTEASOME_BETA_1"/>
    <property type="match status" value="1"/>
</dbReference>
<dbReference type="PROSITE" id="PS51476">
    <property type="entry name" value="PROTEASOME_BETA_2"/>
    <property type="match status" value="1"/>
</dbReference>
<gene>
    <name type="primary">PRE1</name>
    <name type="ordered locus">ECU08_0280</name>
</gene>
<keyword id="KW-0963">Cytoplasm</keyword>
<keyword id="KW-0539">Nucleus</keyword>
<keyword id="KW-0647">Proteasome</keyword>
<keyword id="KW-1185">Reference proteome</keyword>
<evidence type="ECO:0000250" key="1"/>
<evidence type="ECO:0000255" key="2">
    <source>
        <dbReference type="PROSITE-ProRule" id="PRU00809"/>
    </source>
</evidence>
<evidence type="ECO:0000269" key="3">
    <source>
    </source>
</evidence>
<feature type="chain" id="PRO_0000382758" description="Probable proteasome subunit beta type-4">
    <location>
        <begin position="1"/>
        <end position="197"/>
    </location>
</feature>
<comment type="function">
    <text evidence="1">Non-catalytic component of the proteasome which degrades poly-ubiquitinated proteins in the cytoplasm and in the nucleus. It is essential for the regulated turnover of proteins and for the removal of misfolded proteins. The proteasome is a multicatalytic proteinase complex that is characterized by its ability to cleave peptides with Arg, Phe, Tyr, Leu, and Glu adjacent to the leaving group at neutral or slightly basic pH. It has an ATP-dependent proteolytic activity (By similarity).</text>
</comment>
<comment type="subunit">
    <text evidence="1">The 26S proteasome consists of a 20S proteasome core and two 19S regulatory subunits. The 20S proteasome core is composed of 28 subunits that are arranged in four stacked rings, resulting in a barrel-shaped structure. The two end rings are each formed by seven alpha subunits, and the two central rings are each formed by seven beta subunits. The catalytic chamber with the active sites is on the inside of the barrel (By similarity).</text>
</comment>
<comment type="subcellular location">
    <subcellularLocation>
        <location evidence="2">Cytoplasm</location>
    </subcellularLocation>
    <subcellularLocation>
        <location evidence="1">Nucleus</location>
    </subcellularLocation>
</comment>
<comment type="developmental stage">
    <text evidence="3">Expressed in late sporogonial stages.</text>
</comment>
<comment type="similarity">
    <text evidence="2">Belongs to the peptidase T1B family.</text>
</comment>
<reference key="1">
    <citation type="journal article" date="2001" name="Nature">
        <title>Genome sequence and gene compaction of the eukaryote parasite Encephalitozoon cuniculi.</title>
        <authorList>
            <person name="Katinka M.D."/>
            <person name="Duprat S."/>
            <person name="Cornillot E."/>
            <person name="Metenier G."/>
            <person name="Thomarat F."/>
            <person name="Prensier G."/>
            <person name="Barbe V."/>
            <person name="Peyretaillade E."/>
            <person name="Brottier P."/>
            <person name="Wincker P."/>
            <person name="Delbac F."/>
            <person name="El Alaoui H."/>
            <person name="Peyret P."/>
            <person name="Saurin W."/>
            <person name="Gouy M."/>
            <person name="Weissenbach J."/>
            <person name="Vivares C.P."/>
        </authorList>
    </citation>
    <scope>NUCLEOTIDE SEQUENCE [LARGE SCALE GENOMIC DNA]</scope>
    <source>
        <strain>GB-M1</strain>
    </source>
</reference>
<reference key="2">
    <citation type="journal article" date="2006" name="Proteomics">
        <title>Proteomic analysis of the eukaryotic parasite Encephalitozoon cuniculi (microsporidia): a reference map for proteins expressed in late sporogonial stages.</title>
        <authorList>
            <person name="Brosson D."/>
            <person name="Kuhn L."/>
            <person name="Delbac F."/>
            <person name="Garin J."/>
            <person name="Vivares C.P."/>
            <person name="Texier C."/>
        </authorList>
    </citation>
    <scope>IDENTIFICATION BY MASS SPECTROMETRY [LARGE SCALE ANALYSIS]</scope>
    <scope>DEVELOPMENTAL STAGE</scope>
</reference>
<proteinExistence type="evidence at protein level"/>
<accession>Q8SRF1</accession>
<protein>
    <recommendedName>
        <fullName>Probable proteasome subunit beta type-4</fullName>
    </recommendedName>
    <alternativeName>
        <fullName>26S proteasome beta-type subunit PRE1</fullName>
    </alternativeName>
    <alternativeName>
        <fullName>Multicatalytic endopeptidase complex subunit PRE1</fullName>
    </alternativeName>
</protein>
<sequence>MDSSIGIKGRNFAIVAADTKISSSILVVKENHEKFQVIKDRIVMAMTGNQGDAFRTMLYVSESALYEEIQNGIELSPSVLAHMIQNKVHESLRRRQLDISSIVAGRGPEKYDLWSVDKYGAISSVPFCASGYAAYFVYGILDREYSEDITIDAALSIMQKCVNLLKERLMINLEGFMVKIVTDDGILTRTLVPEIKG</sequence>